<protein>
    <recommendedName>
        <fullName evidence="6">Stimulated by retinoic acid gene 8 protein homolog</fullName>
    </recommendedName>
</protein>
<reference evidence="6 7" key="1">
    <citation type="journal article" date="2002" name="J. Assist. Reprod. Genet.">
        <title>Isolation and expression analysis of the testis-specific gene, STRA8, stimulated by retinoic acid gene 8.</title>
        <authorList>
            <person name="Miyamoto T."/>
            <person name="Sengoku K."/>
            <person name="Takuma N."/>
            <person name="Hasuike S."/>
            <person name="Hayashi H."/>
            <person name="Yamauchi T."/>
            <person name="Yamashita T."/>
            <person name="Ishikawa M."/>
        </authorList>
    </citation>
    <scope>NUCLEOTIDE SEQUENCE [MRNA]</scope>
    <scope>TISSUE SPECIFICITY</scope>
</reference>
<reference evidence="8" key="2">
    <citation type="journal article" date="2003" name="Science">
        <title>Human chromosome 7: DNA sequence and biology.</title>
        <authorList>
            <person name="Scherer S.W."/>
            <person name="Cheung J."/>
            <person name="MacDonald J.R."/>
            <person name="Osborne L.R."/>
            <person name="Nakabayashi K."/>
            <person name="Herbrick J.-A."/>
            <person name="Carson A.R."/>
            <person name="Parker-Katiraee L."/>
            <person name="Skaug J."/>
            <person name="Khaja R."/>
            <person name="Zhang J."/>
            <person name="Hudek A.K."/>
            <person name="Li M."/>
            <person name="Haddad M."/>
            <person name="Duggan G.E."/>
            <person name="Fernandez B.A."/>
            <person name="Kanematsu E."/>
            <person name="Gentles S."/>
            <person name="Christopoulos C.C."/>
            <person name="Choufani S."/>
            <person name="Kwasnicka D."/>
            <person name="Zheng X.H."/>
            <person name="Lai Z."/>
            <person name="Nusskern D.R."/>
            <person name="Zhang Q."/>
            <person name="Gu Z."/>
            <person name="Lu F."/>
            <person name="Zeesman S."/>
            <person name="Nowaczyk M.J."/>
            <person name="Teshima I."/>
            <person name="Chitayat D."/>
            <person name="Shuman C."/>
            <person name="Weksberg R."/>
            <person name="Zackai E.H."/>
            <person name="Grebe T.A."/>
            <person name="Cox S.R."/>
            <person name="Kirkpatrick S.J."/>
            <person name="Rahman N."/>
            <person name="Friedman J.M."/>
            <person name="Heng H.H.Q."/>
            <person name="Pelicci P.G."/>
            <person name="Lo-Coco F."/>
            <person name="Belloni E."/>
            <person name="Shaffer L.G."/>
            <person name="Pober B."/>
            <person name="Morton C.C."/>
            <person name="Gusella J.F."/>
            <person name="Bruns G.A.P."/>
            <person name="Korf B.R."/>
            <person name="Quade B.J."/>
            <person name="Ligon A.H."/>
            <person name="Ferguson H."/>
            <person name="Higgins A.W."/>
            <person name="Leach N.T."/>
            <person name="Herrick S.R."/>
            <person name="Lemyre E."/>
            <person name="Farra C.G."/>
            <person name="Kim H.-G."/>
            <person name="Summers A.M."/>
            <person name="Gripp K.W."/>
            <person name="Roberts W."/>
            <person name="Szatmari P."/>
            <person name="Winsor E.J.T."/>
            <person name="Grzeschik K.-H."/>
            <person name="Teebi A."/>
            <person name="Minassian B.A."/>
            <person name="Kere J."/>
            <person name="Armengol L."/>
            <person name="Pujana M.A."/>
            <person name="Estivill X."/>
            <person name="Wilson M.D."/>
            <person name="Koop B.F."/>
            <person name="Tosi S."/>
            <person name="Moore G.E."/>
            <person name="Boright A.P."/>
            <person name="Zlotorynski E."/>
            <person name="Kerem B."/>
            <person name="Kroisel P.M."/>
            <person name="Petek E."/>
            <person name="Oscier D.G."/>
            <person name="Mould S.J."/>
            <person name="Doehner H."/>
            <person name="Doehner K."/>
            <person name="Rommens J.M."/>
            <person name="Vincent J.B."/>
            <person name="Venter J.C."/>
            <person name="Li P.W."/>
            <person name="Mural R.J."/>
            <person name="Adams M.D."/>
            <person name="Tsui L.-C."/>
        </authorList>
    </citation>
    <scope>NUCLEOTIDE SEQUENCE [LARGE SCALE GENOMIC DNA]</scope>
</reference>
<reference evidence="9" key="3">
    <citation type="submission" date="2005-07" db="EMBL/GenBank/DDBJ databases">
        <authorList>
            <person name="Mural R.J."/>
            <person name="Istrail S."/>
            <person name="Sutton G.G."/>
            <person name="Florea L."/>
            <person name="Halpern A.L."/>
            <person name="Mobarry C.M."/>
            <person name="Lippert R."/>
            <person name="Walenz B."/>
            <person name="Shatkay H."/>
            <person name="Dew I."/>
            <person name="Miller J.R."/>
            <person name="Flanigan M.J."/>
            <person name="Edwards N.J."/>
            <person name="Bolanos R."/>
            <person name="Fasulo D."/>
            <person name="Halldorsson B.V."/>
            <person name="Hannenhalli S."/>
            <person name="Turner R."/>
            <person name="Yooseph S."/>
            <person name="Lu F."/>
            <person name="Nusskern D.R."/>
            <person name="Shue B.C."/>
            <person name="Zheng X.H."/>
            <person name="Zhong F."/>
            <person name="Delcher A.L."/>
            <person name="Huson D.H."/>
            <person name="Kravitz S.A."/>
            <person name="Mouchard L."/>
            <person name="Reinert K."/>
            <person name="Remington K.A."/>
            <person name="Clark A.G."/>
            <person name="Waterman M.S."/>
            <person name="Eichler E.E."/>
            <person name="Adams M.D."/>
            <person name="Hunkapiller M.W."/>
            <person name="Myers E.W."/>
            <person name="Venter J.C."/>
        </authorList>
    </citation>
    <scope>NUCLEOTIDE SEQUENCE [LARGE SCALE GENOMIC DNA]</scope>
</reference>
<reference key="4">
    <citation type="journal article" date="2016" name="Nat. Commun.">
        <title>Implementation of meiosis prophase I programme requires a conserved retinoid-independent stabilizer of meiotic transcripts.</title>
        <authorList>
            <person name="Abby E."/>
            <person name="Tourpin S."/>
            <person name="Ribeiro J."/>
            <person name="Daniel K."/>
            <person name="Messiaen S."/>
            <person name="Moison D."/>
            <person name="Guerquin J."/>
            <person name="Gaillard J.C."/>
            <person name="Armengaud J."/>
            <person name="Langa F."/>
            <person name="Toth A."/>
            <person name="Martini E."/>
            <person name="Livera G."/>
        </authorList>
    </citation>
    <scope>TISSUE SPECIFICITY</scope>
    <scope>DEVELOPMENTAL STAGE</scope>
</reference>
<reference key="5">
    <citation type="journal article" date="2017" name="Andrology">
        <title>Next-generation sequencing for patients with non-obstructive azoospermia: implications for significant roles of monogenic/oligogenic mutations.</title>
        <authorList>
            <person name="Nakamura S."/>
            <person name="Miyado M."/>
            <person name="Saito K."/>
            <person name="Katsumi M."/>
            <person name="Nakamura A."/>
            <person name="Kobori Y."/>
            <person name="Tanaka Y."/>
            <person name="Ishikawa H."/>
            <person name="Yoshida A."/>
            <person name="Okada H."/>
            <person name="Hata K."/>
            <person name="Nakabayashi K."/>
            <person name="Okamura K."/>
            <person name="Ogata H."/>
            <person name="Matsubara Y."/>
            <person name="Ogata T."/>
            <person name="Nakai H."/>
            <person name="Fukami M."/>
        </authorList>
    </citation>
    <scope>VARIANT ILE-25</scope>
</reference>
<gene>
    <name evidence="10" type="primary">STRA8</name>
</gene>
<accession>Q7Z7C7</accession>
<dbReference type="EMBL" id="AF513502">
    <property type="protein sequence ID" value="AAP47163.1"/>
    <property type="molecule type" value="mRNA"/>
</dbReference>
<dbReference type="EMBL" id="CH236950">
    <property type="protein sequence ID" value="EAL24061.1"/>
    <property type="molecule type" value="Genomic_DNA"/>
</dbReference>
<dbReference type="EMBL" id="CH471070">
    <property type="protein sequence ID" value="EAW83846.1"/>
    <property type="molecule type" value="Genomic_DNA"/>
</dbReference>
<dbReference type="RefSeq" id="NP_872295.1">
    <property type="nucleotide sequence ID" value="NM_182489.1"/>
</dbReference>
<dbReference type="SMR" id="Q7Z7C7"/>
<dbReference type="BioGRID" id="131396">
    <property type="interactions" value="16"/>
</dbReference>
<dbReference type="FunCoup" id="Q7Z7C7">
    <property type="interactions" value="62"/>
</dbReference>
<dbReference type="IntAct" id="Q7Z7C7">
    <property type="interactions" value="9"/>
</dbReference>
<dbReference type="STRING" id="9606.ENSP00000275764"/>
<dbReference type="GlyGen" id="Q7Z7C7">
    <property type="glycosylation" value="1 site, 1 O-linked glycan (1 site)"/>
</dbReference>
<dbReference type="iPTMnet" id="Q7Z7C7"/>
<dbReference type="PhosphoSitePlus" id="Q7Z7C7"/>
<dbReference type="BioMuta" id="STRA8"/>
<dbReference type="DMDM" id="74713759"/>
<dbReference type="MassIVE" id="Q7Z7C7"/>
<dbReference type="PaxDb" id="9606-ENSP00000275764"/>
<dbReference type="PeptideAtlas" id="Q7Z7C7"/>
<dbReference type="ProteomicsDB" id="69514"/>
<dbReference type="Antibodypedia" id="53744">
    <property type="antibodies" value="177 antibodies from 26 providers"/>
</dbReference>
<dbReference type="DNASU" id="346673"/>
<dbReference type="Ensembl" id="ENST00000275764.3">
    <property type="protein sequence ID" value="ENSP00000275764.3"/>
    <property type="gene ID" value="ENSG00000146857.5"/>
</dbReference>
<dbReference type="GeneID" id="346673"/>
<dbReference type="KEGG" id="hsa:346673"/>
<dbReference type="UCSC" id="uc011kpx.2">
    <property type="organism name" value="human"/>
</dbReference>
<dbReference type="AGR" id="HGNC:30653"/>
<dbReference type="CTD" id="346673"/>
<dbReference type="DisGeNET" id="346673"/>
<dbReference type="GeneCards" id="STRA8"/>
<dbReference type="HGNC" id="HGNC:30653">
    <property type="gene designation" value="STRA8"/>
</dbReference>
<dbReference type="HPA" id="ENSG00000146857">
    <property type="expression patterns" value="Not detected"/>
</dbReference>
<dbReference type="MIM" id="609987">
    <property type="type" value="gene"/>
</dbReference>
<dbReference type="neXtProt" id="NX_Q7Z7C7"/>
<dbReference type="OpenTargets" id="ENSG00000146857"/>
<dbReference type="PharmGKB" id="PA162405043"/>
<dbReference type="VEuPathDB" id="HostDB:ENSG00000146857"/>
<dbReference type="eggNOG" id="ENOG502RT8C">
    <property type="taxonomic scope" value="Eukaryota"/>
</dbReference>
<dbReference type="GeneTree" id="ENSGT00390000017181"/>
<dbReference type="HOGENOM" id="CLU_049039_0_0_1"/>
<dbReference type="InParanoid" id="Q7Z7C7"/>
<dbReference type="OrthoDB" id="10043438at2759"/>
<dbReference type="PAN-GO" id="Q7Z7C7">
    <property type="GO annotations" value="5 GO annotations based on evolutionary models"/>
</dbReference>
<dbReference type="PhylomeDB" id="Q7Z7C7"/>
<dbReference type="TreeFam" id="TF335594"/>
<dbReference type="PathwayCommons" id="Q7Z7C7"/>
<dbReference type="SignaLink" id="Q7Z7C7"/>
<dbReference type="BioGRID-ORCS" id="346673">
    <property type="hits" value="10 hits in 1150 CRISPR screens"/>
</dbReference>
<dbReference type="GenomeRNAi" id="346673"/>
<dbReference type="Pharos" id="Q7Z7C7">
    <property type="development level" value="Tbio"/>
</dbReference>
<dbReference type="PRO" id="PR:Q7Z7C7"/>
<dbReference type="Proteomes" id="UP000005640">
    <property type="component" value="Chromosome 7"/>
</dbReference>
<dbReference type="RNAct" id="Q7Z7C7">
    <property type="molecule type" value="protein"/>
</dbReference>
<dbReference type="Bgee" id="ENSG00000146857">
    <property type="expression patterns" value="Expressed in primordial germ cell in gonad and 40 other cell types or tissues"/>
</dbReference>
<dbReference type="ExpressionAtlas" id="Q7Z7C7">
    <property type="expression patterns" value="baseline and differential"/>
</dbReference>
<dbReference type="GO" id="GO:0005737">
    <property type="term" value="C:cytoplasm"/>
    <property type="evidence" value="ECO:0000250"/>
    <property type="project" value="UniProtKB"/>
</dbReference>
<dbReference type="GO" id="GO:0005634">
    <property type="term" value="C:nucleus"/>
    <property type="evidence" value="ECO:0000314"/>
    <property type="project" value="UniProtKB"/>
</dbReference>
<dbReference type="GO" id="GO:0046983">
    <property type="term" value="F:protein dimerization activity"/>
    <property type="evidence" value="ECO:0007669"/>
    <property type="project" value="InterPro"/>
</dbReference>
<dbReference type="GO" id="GO:0090427">
    <property type="term" value="P:activation of meiosis"/>
    <property type="evidence" value="ECO:0000250"/>
    <property type="project" value="UniProtKB"/>
</dbReference>
<dbReference type="GO" id="GO:0071300">
    <property type="term" value="P:cellular response to retinoic acid"/>
    <property type="evidence" value="ECO:0000250"/>
    <property type="project" value="UniProtKB"/>
</dbReference>
<dbReference type="GO" id="GO:0006260">
    <property type="term" value="P:DNA replication"/>
    <property type="evidence" value="ECO:0007669"/>
    <property type="project" value="UniProtKB-KW"/>
</dbReference>
<dbReference type="GO" id="GO:0051321">
    <property type="term" value="P:meiotic cell cycle"/>
    <property type="evidence" value="ECO:0000250"/>
    <property type="project" value="UniProtKB"/>
</dbReference>
<dbReference type="GO" id="GO:0048477">
    <property type="term" value="P:oogenesis"/>
    <property type="evidence" value="ECO:0000250"/>
    <property type="project" value="UniProtKB"/>
</dbReference>
<dbReference type="GO" id="GO:0006357">
    <property type="term" value="P:regulation of transcription by RNA polymerase II"/>
    <property type="evidence" value="ECO:0000250"/>
    <property type="project" value="UniProtKB"/>
</dbReference>
<dbReference type="GO" id="GO:0007283">
    <property type="term" value="P:spermatogenesis"/>
    <property type="evidence" value="ECO:0000250"/>
    <property type="project" value="UniProtKB"/>
</dbReference>
<dbReference type="InterPro" id="IPR057021">
    <property type="entry name" value="bHLH_STRA8"/>
</dbReference>
<dbReference type="InterPro" id="IPR036638">
    <property type="entry name" value="HLH_DNA-bd_sf"/>
</dbReference>
<dbReference type="InterPro" id="IPR033537">
    <property type="entry name" value="Stra8"/>
</dbReference>
<dbReference type="PANTHER" id="PTHR35254">
    <property type="entry name" value="STIMULATED BY RETINOIC ACID GENE 8 PROTEIN HOMOLOG"/>
    <property type="match status" value="1"/>
</dbReference>
<dbReference type="PANTHER" id="PTHR35254:SF1">
    <property type="entry name" value="STIMULATED BY RETINOIC ACID GENE 8 PROTEIN HOMOLOG"/>
    <property type="match status" value="1"/>
</dbReference>
<dbReference type="Pfam" id="PF23175">
    <property type="entry name" value="bHLH_STRA8"/>
    <property type="match status" value="1"/>
</dbReference>
<dbReference type="SUPFAM" id="SSF47459">
    <property type="entry name" value="HLH, helix-loop-helix DNA-binding domain"/>
    <property type="match status" value="1"/>
</dbReference>
<evidence type="ECO:0000250" key="1">
    <source>
        <dbReference type="UniProtKB" id="P70278"/>
    </source>
</evidence>
<evidence type="ECO:0000255" key="2"/>
<evidence type="ECO:0000269" key="3">
    <source>
    </source>
</evidence>
<evidence type="ECO:0000269" key="4">
    <source>
    </source>
</evidence>
<evidence type="ECO:0000269" key="5">
    <source>
    </source>
</evidence>
<evidence type="ECO:0000305" key="6"/>
<evidence type="ECO:0000312" key="7">
    <source>
        <dbReference type="EMBL" id="AAP47163.1"/>
    </source>
</evidence>
<evidence type="ECO:0000312" key="8">
    <source>
        <dbReference type="EMBL" id="EAL24061.1"/>
    </source>
</evidence>
<evidence type="ECO:0000312" key="9">
    <source>
        <dbReference type="EMBL" id="EAW83846.1"/>
    </source>
</evidence>
<evidence type="ECO:0000312" key="10">
    <source>
        <dbReference type="HGNC" id="HGNC:30653"/>
    </source>
</evidence>
<keyword id="KW-0175">Coiled coil</keyword>
<keyword id="KW-0963">Cytoplasm</keyword>
<keyword id="KW-0221">Differentiation</keyword>
<keyword id="KW-0235">DNA replication</keyword>
<keyword id="KW-0469">Meiosis</keyword>
<keyword id="KW-0539">Nucleus</keyword>
<keyword id="KW-0896">Oogenesis</keyword>
<keyword id="KW-0597">Phosphoprotein</keyword>
<keyword id="KW-1267">Proteomics identification</keyword>
<keyword id="KW-1185">Reference proteome</keyword>
<keyword id="KW-0744">Spermatogenesis</keyword>
<keyword id="KW-0804">Transcription</keyword>
<keyword id="KW-0805">Transcription regulation</keyword>
<feature type="chain" id="PRO_0000318114" description="Stimulated by retinoic acid gene 8 protein homolog">
    <location>
        <begin position="1"/>
        <end position="330"/>
    </location>
</feature>
<feature type="coiled-coil region" evidence="2">
    <location>
        <begin position="88"/>
        <end position="112"/>
    </location>
</feature>
<feature type="short sequence motif" description="Nuclear localization signal (NLS)" evidence="1">
    <location>
        <begin position="50"/>
        <end position="55"/>
    </location>
</feature>
<feature type="sequence variant" id="VAR_081144" description="Found in patients with non-obstructive azoospermia; uncertain significance." evidence="5">
    <original>T</original>
    <variation>I</variation>
    <location>
        <position position="25"/>
    </location>
</feature>
<name>STRA8_HUMAN</name>
<sequence>MGKIDVDKILFFNQEIRLWQLIMATPEENSNPHDRATPQLPAQLQELEHRVARRRLSQARHRATLAALFNNLRKTVYSQSDLIASKWQVLNKAKSHIPELEQTLDNLLKLKASFNLEDGHASSLEEVKKEYASMYSGNDSFPQNGSSPWYLNFYKQTMDLLTGSGIITPQEAALPIVSAAISHLWQNLSEERKASLRQAWAQKHRGPATLAEACREPACAEGSVKDSGVDSQGASCSLVSTPEEILFEDAFDVASFLDKSEVPSTSSSSSVLASCNPENPEEKFQLYMQIINFFKGLSCANTQVKQEASFPVDEEMIMLQCTETFDDEDL</sequence>
<comment type="function">
    <text evidence="1">Meiosis-inducer required for the transition into meiosis for both female and male germ cells. In female germ cells, acts downstream of ZGLP1 as a key effector of the meiotic program: required for premeiotic DNA replication and subsequent events in meiotic prophase. During spermatogenesis, next to its role in meiotic initiation, promotes (but is not required for) spermatogonial differentiation. In complex with MEIOSIN, directly activates the transcription of a subset of critical meiotic genes playing a central role in cell-cycle switching from mitosis to meiosis.</text>
</comment>
<comment type="subunit">
    <text evidence="1">Interacts with XPO1. Interacts with MEIOSIN (By similarity).</text>
</comment>
<comment type="interaction">
    <interactant intactId="EBI-12036261">
        <id>Q7Z7C7</id>
    </interactant>
    <interactant intactId="EBI-17183751">
        <id>X5D778</id>
        <label>ANKRD11</label>
    </interactant>
    <organismsDiffer>false</organismsDiffer>
    <experiments>3</experiments>
</comment>
<comment type="interaction">
    <interactant intactId="EBI-12036261">
        <id>Q7Z7C7</id>
    </interactant>
    <interactant intactId="EBI-1188472">
        <id>P78358</id>
        <label>CTAG1B</label>
    </interactant>
    <organismsDiffer>false</organismsDiffer>
    <experiments>3</experiments>
</comment>
<comment type="interaction">
    <interactant intactId="EBI-12036261">
        <id>Q7Z7C7</id>
    </interactant>
    <interactant intactId="EBI-751587">
        <id>Q9GZU7</id>
        <label>CTDSP1</label>
    </interactant>
    <organismsDiffer>false</organismsDiffer>
    <experiments>3</experiments>
</comment>
<comment type="interaction">
    <interactant intactId="EBI-12036261">
        <id>Q7Z7C7</id>
    </interactant>
    <interactant intactId="EBI-16439278">
        <id>Q6FHY5</id>
        <label>MEOX2</label>
    </interactant>
    <organismsDiffer>false</organismsDiffer>
    <experiments>3</experiments>
</comment>
<comment type="interaction">
    <interactant intactId="EBI-12036261">
        <id>Q7Z7C7</id>
    </interactant>
    <interactant intactId="EBI-12029004">
        <id>P78424</id>
        <label>POU6F2</label>
    </interactant>
    <organismsDiffer>false</organismsDiffer>
    <experiments>3</experiments>
</comment>
<comment type="interaction">
    <interactant intactId="EBI-12036261">
        <id>Q7Z7C7</id>
    </interactant>
    <interactant intactId="EBI-2822051">
        <id>Q14140</id>
        <label>SERTAD2</label>
    </interactant>
    <organismsDiffer>false</organismsDiffer>
    <experiments>3</experiments>
</comment>
<comment type="interaction">
    <interactant intactId="EBI-12036261">
        <id>Q7Z7C7</id>
    </interactant>
    <interactant intactId="EBI-1105213">
        <id>Q9UBB9</id>
        <label>TFIP11</label>
    </interactant>
    <organismsDiffer>false</organismsDiffer>
    <experiments>3</experiments>
</comment>
<comment type="interaction">
    <interactant intactId="EBI-12036261">
        <id>Q7Z7C7</id>
    </interactant>
    <interactant intactId="EBI-12030590">
        <id>Q9H0C1</id>
        <label>ZMYND12</label>
    </interactant>
    <organismsDiffer>false</organismsDiffer>
    <experiments>3</experiments>
</comment>
<comment type="subcellular location">
    <subcellularLocation>
        <location evidence="1">Cytoplasm</location>
    </subcellularLocation>
    <subcellularLocation>
        <location evidence="1">Nucleus</location>
    </subcellularLocation>
    <text evidence="1">Shuttles between nucleus and cytoplasm. Nuclear export is XPO1-dependent.</text>
</comment>
<comment type="tissue specificity">
    <text evidence="3 4">Expressed specifically in testis and fetal ovaries.</text>
</comment>
<comment type="developmental stage">
    <text evidence="4">Expression detected in fetal ovaries between wpf (weeks post-fertilization) 11 and 27; expression peaks at wpf 14.5 and is decreasing afterwards.</text>
</comment>
<comment type="PTM">
    <text evidence="1">Phosphorylated.</text>
</comment>
<proteinExistence type="evidence at protein level"/>
<organism>
    <name type="scientific">Homo sapiens</name>
    <name type="common">Human</name>
    <dbReference type="NCBI Taxonomy" id="9606"/>
    <lineage>
        <taxon>Eukaryota</taxon>
        <taxon>Metazoa</taxon>
        <taxon>Chordata</taxon>
        <taxon>Craniata</taxon>
        <taxon>Vertebrata</taxon>
        <taxon>Euteleostomi</taxon>
        <taxon>Mammalia</taxon>
        <taxon>Eutheria</taxon>
        <taxon>Euarchontoglires</taxon>
        <taxon>Primates</taxon>
        <taxon>Haplorrhini</taxon>
        <taxon>Catarrhini</taxon>
        <taxon>Hominidae</taxon>
        <taxon>Homo</taxon>
    </lineage>
</organism>